<organism>
    <name type="scientific">Olea europaea</name>
    <name type="common">Common olive</name>
    <dbReference type="NCBI Taxonomy" id="4146"/>
    <lineage>
        <taxon>Eukaryota</taxon>
        <taxon>Viridiplantae</taxon>
        <taxon>Streptophyta</taxon>
        <taxon>Embryophyta</taxon>
        <taxon>Tracheophyta</taxon>
        <taxon>Spermatophyta</taxon>
        <taxon>Magnoliopsida</taxon>
        <taxon>eudicotyledons</taxon>
        <taxon>Gunneridae</taxon>
        <taxon>Pentapetalae</taxon>
        <taxon>asterids</taxon>
        <taxon>lamiids</taxon>
        <taxon>Lamiales</taxon>
        <taxon>Oleaceae</taxon>
        <taxon>Oleeae</taxon>
        <taxon>Olea</taxon>
    </lineage>
</organism>
<feature type="initiator methionine" description="Removed" evidence="1">
    <location>
        <position position="1"/>
    </location>
</feature>
<feature type="chain" id="PRO_0000425021" description="Profilin-2">
    <location>
        <begin position="2"/>
        <end position="134"/>
    </location>
</feature>
<feature type="short sequence motif" description="Involved in PIP2 interaction">
    <location>
        <begin position="84"/>
        <end position="100"/>
    </location>
</feature>
<feature type="modified residue" description="Phosphothreonine" evidence="1">
    <location>
        <position position="114"/>
    </location>
</feature>
<feature type="disulfide bond" evidence="3">
    <location>
        <begin position="13"/>
        <end position="118"/>
    </location>
</feature>
<sequence length="134" mass="14369">MSWQAYVDDHLMCDIEGHEGHRLTAAAIVGHDGSVWAQSATFPQFKPEEMNGIMTDFNEPGHLAPTGLHLGGTKYMVIQGEAGAVIRGKKGSGGITIKKTGQAVVCGIYEEPVTPGQCNMVVERLGDYLIEQGL</sequence>
<comment type="function">
    <text evidence="1">Binds to actin and affects the structure of the cytoskeleton. At high concentrations, profilin prevents the polymerization of actin, whereas it enhances it at low concentrations (By similarity).</text>
</comment>
<comment type="subunit">
    <text evidence="1">Occurs in many kinds of cells as a complex with monomeric actin in a 1:1 ratio.</text>
</comment>
<comment type="subcellular location">
    <subcellularLocation>
        <location evidence="1">Cytoplasm</location>
        <location evidence="1">Cytoskeleton</location>
    </subcellularLocation>
</comment>
<comment type="PTM">
    <text evidence="1">Phosphorylated by MAP kinases.</text>
</comment>
<comment type="polymorphism">
    <text>Several isoforms of the allergen exist due to polymorphism.</text>
</comment>
<comment type="allergen">
    <text>Causes an allergic reaction in human.</text>
</comment>
<comment type="miscellaneous">
    <text evidence="3">The variability of the residues taking part of IgE-binding epitopes might be responsible of the difference in cross-reactivity among olive pollen cultivars, and between distantly related pollen species, leading to a variable range of allergy reactions among atopic patients.</text>
</comment>
<comment type="similarity">
    <text evidence="2">Belongs to the profilin family.</text>
</comment>
<keyword id="KW-0009">Actin-binding</keyword>
<keyword id="KW-0020">Allergen</keyword>
<keyword id="KW-0963">Cytoplasm</keyword>
<keyword id="KW-0206">Cytoskeleton</keyword>
<keyword id="KW-1015">Disulfide bond</keyword>
<keyword id="KW-0597">Phosphoprotein</keyword>
<evidence type="ECO:0000250" key="1"/>
<evidence type="ECO:0000305" key="2"/>
<evidence type="ECO:0000305" key="3">
    <source>
    </source>
</evidence>
<protein>
    <recommendedName>
        <fullName>Profilin-2</fullName>
    </recommendedName>
    <alternativeName>
        <fullName>Pollen allergen Ole e 2</fullName>
    </alternativeName>
    <allergenName>Ole e 2</allergenName>
</protein>
<reference key="1">
    <citation type="journal article" date="2012" name="PLoS ONE">
        <title>Characterization of profilin polymorphism in pollen with a focus on multifunctionality.</title>
        <authorList>
            <person name="Jimenez-Lopez J.C."/>
            <person name="Morales S."/>
            <person name="Castro A.J."/>
            <person name="Volkmann D."/>
            <person name="Rodriguez-Garcia M.I."/>
            <person name="Alche Jde D."/>
        </authorList>
    </citation>
    <scope>NUCLEOTIDE SEQUENCE [MRNA]</scope>
    <scope>POLYMORPHISM</scope>
    <source>
        <strain>cv. Sevillenca</strain>
    </source>
</reference>
<reference key="2">
    <citation type="journal article" date="2013" name="PLoS ONE">
        <title>Analysis of the effects of polymorphism on pollen profilin structural functionality and the generation of conformational, T- and B-cell epitopes.</title>
        <authorList>
            <person name="Jimenez-Lopez J.C."/>
            <person name="Rodriguez-Garcia M.I."/>
            <person name="Alche J.D."/>
        </authorList>
    </citation>
    <scope>3D-STRUCTURE MODELING</scope>
    <scope>DISULFIDE BOND</scope>
</reference>
<name>PROBD_OLEEU</name>
<proteinExistence type="evidence at protein level"/>
<accession>A4GDT0</accession>
<dbReference type="EMBL" id="DQ138348">
    <property type="protein sequence ID" value="AAZ30426.1"/>
    <property type="molecule type" value="mRNA"/>
</dbReference>
<dbReference type="SMR" id="A4GDT0"/>
<dbReference type="Allergome" id="490">
    <property type="allergen name" value="Ole e 2"/>
</dbReference>
<dbReference type="GO" id="GO:0005938">
    <property type="term" value="C:cell cortex"/>
    <property type="evidence" value="ECO:0007669"/>
    <property type="project" value="TreeGrafter"/>
</dbReference>
<dbReference type="GO" id="GO:0005856">
    <property type="term" value="C:cytoskeleton"/>
    <property type="evidence" value="ECO:0007669"/>
    <property type="project" value="UniProtKB-SubCell"/>
</dbReference>
<dbReference type="GO" id="GO:0003785">
    <property type="term" value="F:actin monomer binding"/>
    <property type="evidence" value="ECO:0007669"/>
    <property type="project" value="TreeGrafter"/>
</dbReference>
<dbReference type="CDD" id="cd00148">
    <property type="entry name" value="PROF"/>
    <property type="match status" value="1"/>
</dbReference>
<dbReference type="FunFam" id="3.30.450.30:FF:000001">
    <property type="entry name" value="Profilin"/>
    <property type="match status" value="1"/>
</dbReference>
<dbReference type="Gene3D" id="3.30.450.30">
    <property type="entry name" value="Dynein light chain 2a, cytoplasmic"/>
    <property type="match status" value="1"/>
</dbReference>
<dbReference type="InterPro" id="IPR048278">
    <property type="entry name" value="PFN"/>
</dbReference>
<dbReference type="InterPro" id="IPR005455">
    <property type="entry name" value="PFN_euk"/>
</dbReference>
<dbReference type="InterPro" id="IPR036140">
    <property type="entry name" value="PFN_sf"/>
</dbReference>
<dbReference type="InterPro" id="IPR027310">
    <property type="entry name" value="Profilin_CS"/>
</dbReference>
<dbReference type="PANTHER" id="PTHR11604">
    <property type="entry name" value="PROFILIN"/>
    <property type="match status" value="1"/>
</dbReference>
<dbReference type="PANTHER" id="PTHR11604:SF25">
    <property type="entry name" value="PROFILIN-5"/>
    <property type="match status" value="1"/>
</dbReference>
<dbReference type="Pfam" id="PF00235">
    <property type="entry name" value="Profilin"/>
    <property type="match status" value="1"/>
</dbReference>
<dbReference type="PRINTS" id="PR00392">
    <property type="entry name" value="PROFILIN"/>
</dbReference>
<dbReference type="PRINTS" id="PR01640">
    <property type="entry name" value="PROFILINPLNT"/>
</dbReference>
<dbReference type="SMART" id="SM00392">
    <property type="entry name" value="PROF"/>
    <property type="match status" value="1"/>
</dbReference>
<dbReference type="SUPFAM" id="SSF55770">
    <property type="entry name" value="Profilin (actin-binding protein)"/>
    <property type="match status" value="1"/>
</dbReference>
<dbReference type="PROSITE" id="PS00414">
    <property type="entry name" value="PROFILIN"/>
    <property type="match status" value="1"/>
</dbReference>